<gene>
    <name evidence="1" type="primary">hisS</name>
    <name type="ordered locus">GK2573</name>
</gene>
<dbReference type="EC" id="6.1.1.21" evidence="1"/>
<dbReference type="EMBL" id="BA000043">
    <property type="protein sequence ID" value="BAD76858.1"/>
    <property type="molecule type" value="Genomic_DNA"/>
</dbReference>
<dbReference type="RefSeq" id="WP_011232050.1">
    <property type="nucleotide sequence ID" value="NC_006510.1"/>
</dbReference>
<dbReference type="SMR" id="Q5KWS8"/>
<dbReference type="STRING" id="235909.GK2573"/>
<dbReference type="GeneID" id="32064476"/>
<dbReference type="KEGG" id="gka:GK2573"/>
<dbReference type="eggNOG" id="COG0124">
    <property type="taxonomic scope" value="Bacteria"/>
</dbReference>
<dbReference type="HOGENOM" id="CLU_025113_1_1_9"/>
<dbReference type="Proteomes" id="UP000001172">
    <property type="component" value="Chromosome"/>
</dbReference>
<dbReference type="GO" id="GO:0005737">
    <property type="term" value="C:cytoplasm"/>
    <property type="evidence" value="ECO:0007669"/>
    <property type="project" value="UniProtKB-SubCell"/>
</dbReference>
<dbReference type="GO" id="GO:0005524">
    <property type="term" value="F:ATP binding"/>
    <property type="evidence" value="ECO:0007669"/>
    <property type="project" value="UniProtKB-UniRule"/>
</dbReference>
<dbReference type="GO" id="GO:0140096">
    <property type="term" value="F:catalytic activity, acting on a protein"/>
    <property type="evidence" value="ECO:0007669"/>
    <property type="project" value="UniProtKB-ARBA"/>
</dbReference>
<dbReference type="GO" id="GO:0004821">
    <property type="term" value="F:histidine-tRNA ligase activity"/>
    <property type="evidence" value="ECO:0007669"/>
    <property type="project" value="UniProtKB-UniRule"/>
</dbReference>
<dbReference type="GO" id="GO:0016740">
    <property type="term" value="F:transferase activity"/>
    <property type="evidence" value="ECO:0007669"/>
    <property type="project" value="UniProtKB-ARBA"/>
</dbReference>
<dbReference type="GO" id="GO:0006427">
    <property type="term" value="P:histidyl-tRNA aminoacylation"/>
    <property type="evidence" value="ECO:0007669"/>
    <property type="project" value="UniProtKB-UniRule"/>
</dbReference>
<dbReference type="CDD" id="cd00773">
    <property type="entry name" value="HisRS-like_core"/>
    <property type="match status" value="1"/>
</dbReference>
<dbReference type="CDD" id="cd00859">
    <property type="entry name" value="HisRS_anticodon"/>
    <property type="match status" value="1"/>
</dbReference>
<dbReference type="FunFam" id="3.30.930.10:FF:000005">
    <property type="entry name" value="Histidine--tRNA ligase"/>
    <property type="match status" value="1"/>
</dbReference>
<dbReference type="Gene3D" id="3.40.50.800">
    <property type="entry name" value="Anticodon-binding domain"/>
    <property type="match status" value="1"/>
</dbReference>
<dbReference type="Gene3D" id="3.30.930.10">
    <property type="entry name" value="Bira Bifunctional Protein, Domain 2"/>
    <property type="match status" value="1"/>
</dbReference>
<dbReference type="HAMAP" id="MF_00127">
    <property type="entry name" value="His_tRNA_synth"/>
    <property type="match status" value="1"/>
</dbReference>
<dbReference type="InterPro" id="IPR006195">
    <property type="entry name" value="aa-tRNA-synth_II"/>
</dbReference>
<dbReference type="InterPro" id="IPR045864">
    <property type="entry name" value="aa-tRNA-synth_II/BPL/LPL"/>
</dbReference>
<dbReference type="InterPro" id="IPR004154">
    <property type="entry name" value="Anticodon-bd"/>
</dbReference>
<dbReference type="InterPro" id="IPR036621">
    <property type="entry name" value="Anticodon-bd_dom_sf"/>
</dbReference>
<dbReference type="InterPro" id="IPR015807">
    <property type="entry name" value="His-tRNA-ligase"/>
</dbReference>
<dbReference type="InterPro" id="IPR041715">
    <property type="entry name" value="HisRS-like_core"/>
</dbReference>
<dbReference type="InterPro" id="IPR004516">
    <property type="entry name" value="HisRS/HisZ"/>
</dbReference>
<dbReference type="InterPro" id="IPR033656">
    <property type="entry name" value="HisRS_anticodon"/>
</dbReference>
<dbReference type="NCBIfam" id="TIGR00442">
    <property type="entry name" value="hisS"/>
    <property type="match status" value="1"/>
</dbReference>
<dbReference type="PANTHER" id="PTHR43707:SF1">
    <property type="entry name" value="HISTIDINE--TRNA LIGASE, MITOCHONDRIAL-RELATED"/>
    <property type="match status" value="1"/>
</dbReference>
<dbReference type="PANTHER" id="PTHR43707">
    <property type="entry name" value="HISTIDYL-TRNA SYNTHETASE"/>
    <property type="match status" value="1"/>
</dbReference>
<dbReference type="Pfam" id="PF03129">
    <property type="entry name" value="HGTP_anticodon"/>
    <property type="match status" value="1"/>
</dbReference>
<dbReference type="Pfam" id="PF13393">
    <property type="entry name" value="tRNA-synt_His"/>
    <property type="match status" value="1"/>
</dbReference>
<dbReference type="PIRSF" id="PIRSF001549">
    <property type="entry name" value="His-tRNA_synth"/>
    <property type="match status" value="1"/>
</dbReference>
<dbReference type="SUPFAM" id="SSF52954">
    <property type="entry name" value="Class II aaRS ABD-related"/>
    <property type="match status" value="1"/>
</dbReference>
<dbReference type="SUPFAM" id="SSF55681">
    <property type="entry name" value="Class II aaRS and biotin synthetases"/>
    <property type="match status" value="1"/>
</dbReference>
<dbReference type="PROSITE" id="PS50862">
    <property type="entry name" value="AA_TRNA_LIGASE_II"/>
    <property type="match status" value="1"/>
</dbReference>
<accession>Q5KWS8</accession>
<keyword id="KW-0030">Aminoacyl-tRNA synthetase</keyword>
<keyword id="KW-0067">ATP-binding</keyword>
<keyword id="KW-0963">Cytoplasm</keyword>
<keyword id="KW-0436">Ligase</keyword>
<keyword id="KW-0547">Nucleotide-binding</keyword>
<keyword id="KW-0648">Protein biosynthesis</keyword>
<keyword id="KW-1185">Reference proteome</keyword>
<sequence>MAFQIPRGTQDVLPGDSEKWQYVEHIARSLCSRYGYQEIRTPIFEHTELFLRGVGDTTDIVQKEMYTFEDKGGRALTLRPEGTAPVVRAFVEHKLYGSPNQPLKLYYSGPMFRYERPEAGRFRQFVQFGVEALGSSDPAIDAEVMALAMHIYEALGLKRIRLVINSLGDLDSRRAHREALVRHFSNRIHELCPDCQTRLHTNPLRILDCKKDRDHELMATAPSILDYLNDESRAYFEKVKQYLTALGIPFVIDARLVRGLDYYNHTTFEIMSEAEGFGAAATLCGGGRYNGLVQEIGGPETPGIGFALSIERLLAALDAEGVELPVESGLDCYVVAVGERAKDEAVRLVYALRRSGLRVDQDYLGRKLKAQLKAADRLGASFVAIIGDEELERQEAAVKHMASGEQTNVPLGELAHFLHERIGKEE</sequence>
<comment type="catalytic activity">
    <reaction evidence="1">
        <text>tRNA(His) + L-histidine + ATP = L-histidyl-tRNA(His) + AMP + diphosphate + H(+)</text>
        <dbReference type="Rhea" id="RHEA:17313"/>
        <dbReference type="Rhea" id="RHEA-COMP:9665"/>
        <dbReference type="Rhea" id="RHEA-COMP:9689"/>
        <dbReference type="ChEBI" id="CHEBI:15378"/>
        <dbReference type="ChEBI" id="CHEBI:30616"/>
        <dbReference type="ChEBI" id="CHEBI:33019"/>
        <dbReference type="ChEBI" id="CHEBI:57595"/>
        <dbReference type="ChEBI" id="CHEBI:78442"/>
        <dbReference type="ChEBI" id="CHEBI:78527"/>
        <dbReference type="ChEBI" id="CHEBI:456215"/>
        <dbReference type="EC" id="6.1.1.21"/>
    </reaction>
</comment>
<comment type="subunit">
    <text evidence="1">Homodimer.</text>
</comment>
<comment type="subcellular location">
    <subcellularLocation>
        <location evidence="1">Cytoplasm</location>
    </subcellularLocation>
</comment>
<comment type="similarity">
    <text evidence="1">Belongs to the class-II aminoacyl-tRNA synthetase family.</text>
</comment>
<evidence type="ECO:0000255" key="1">
    <source>
        <dbReference type="HAMAP-Rule" id="MF_00127"/>
    </source>
</evidence>
<reference key="1">
    <citation type="journal article" date="2004" name="Nucleic Acids Res.">
        <title>Thermoadaptation trait revealed by the genome sequence of thermophilic Geobacillus kaustophilus.</title>
        <authorList>
            <person name="Takami H."/>
            <person name="Takaki Y."/>
            <person name="Chee G.-J."/>
            <person name="Nishi S."/>
            <person name="Shimamura S."/>
            <person name="Suzuki H."/>
            <person name="Matsui S."/>
            <person name="Uchiyama I."/>
        </authorList>
    </citation>
    <scope>NUCLEOTIDE SEQUENCE [LARGE SCALE GENOMIC DNA]</scope>
    <source>
        <strain>HTA426</strain>
    </source>
</reference>
<name>SYH_GEOKA</name>
<organism>
    <name type="scientific">Geobacillus kaustophilus (strain HTA426)</name>
    <dbReference type="NCBI Taxonomy" id="235909"/>
    <lineage>
        <taxon>Bacteria</taxon>
        <taxon>Bacillati</taxon>
        <taxon>Bacillota</taxon>
        <taxon>Bacilli</taxon>
        <taxon>Bacillales</taxon>
        <taxon>Anoxybacillaceae</taxon>
        <taxon>Geobacillus</taxon>
        <taxon>Geobacillus thermoleovorans group</taxon>
    </lineage>
</organism>
<proteinExistence type="inferred from homology"/>
<protein>
    <recommendedName>
        <fullName evidence="1">Histidine--tRNA ligase</fullName>
        <ecNumber evidence="1">6.1.1.21</ecNumber>
    </recommendedName>
    <alternativeName>
        <fullName evidence="1">Histidyl-tRNA synthetase</fullName>
        <shortName evidence="1">HisRS</shortName>
    </alternativeName>
</protein>
<feature type="chain" id="PRO_0000136166" description="Histidine--tRNA ligase">
    <location>
        <begin position="1"/>
        <end position="426"/>
    </location>
</feature>